<keyword id="KW-0479">Metal-binding</keyword>
<keyword id="KW-0687">Ribonucleoprotein</keyword>
<keyword id="KW-0689">Ribosomal protein</keyword>
<keyword id="KW-0694">RNA-binding</keyword>
<keyword id="KW-0699">rRNA-binding</keyword>
<keyword id="KW-0862">Zinc</keyword>
<reference key="1">
    <citation type="journal article" date="2003" name="Lancet">
        <title>Genome sequence of Vibrio parahaemolyticus: a pathogenic mechanism distinct from that of V. cholerae.</title>
        <authorList>
            <person name="Makino K."/>
            <person name="Oshima K."/>
            <person name="Kurokawa K."/>
            <person name="Yokoyama K."/>
            <person name="Uda T."/>
            <person name="Tagomori K."/>
            <person name="Iijima Y."/>
            <person name="Najima M."/>
            <person name="Nakano M."/>
            <person name="Yamashita A."/>
            <person name="Kubota Y."/>
            <person name="Kimura S."/>
            <person name="Yasunaga T."/>
            <person name="Honda T."/>
            <person name="Shinagawa H."/>
            <person name="Hattori M."/>
            <person name="Iida T."/>
        </authorList>
    </citation>
    <scope>NUCLEOTIDE SEQUENCE [LARGE SCALE GENOMIC DNA]</scope>
    <source>
        <strain>RIMD 2210633</strain>
    </source>
</reference>
<organism>
    <name type="scientific">Vibrio parahaemolyticus serotype O3:K6 (strain RIMD 2210633)</name>
    <dbReference type="NCBI Taxonomy" id="223926"/>
    <lineage>
        <taxon>Bacteria</taxon>
        <taxon>Pseudomonadati</taxon>
        <taxon>Pseudomonadota</taxon>
        <taxon>Gammaproteobacteria</taxon>
        <taxon>Vibrionales</taxon>
        <taxon>Vibrionaceae</taxon>
        <taxon>Vibrio</taxon>
    </lineage>
</organism>
<comment type="function">
    <text evidence="1">Binds the 23S rRNA.</text>
</comment>
<comment type="cofactor">
    <cofactor evidence="1">
        <name>Zn(2+)</name>
        <dbReference type="ChEBI" id="CHEBI:29105"/>
    </cofactor>
    <text evidence="1">Binds 1 zinc ion per subunit.</text>
</comment>
<comment type="subunit">
    <text evidence="1">Part of the 50S ribosomal subunit.</text>
</comment>
<comment type="similarity">
    <text evidence="1">Belongs to the bacterial ribosomal protein bL31 family. Type A subfamily.</text>
</comment>
<name>RL31_VIBPA</name>
<feature type="chain" id="PRO_0000173178" description="Large ribosomal subunit protein bL31">
    <location>
        <begin position="1"/>
        <end position="73"/>
    </location>
</feature>
<feature type="binding site" evidence="1">
    <location>
        <position position="16"/>
    </location>
    <ligand>
        <name>Zn(2+)</name>
        <dbReference type="ChEBI" id="CHEBI:29105"/>
    </ligand>
</feature>
<feature type="binding site" evidence="1">
    <location>
        <position position="18"/>
    </location>
    <ligand>
        <name>Zn(2+)</name>
        <dbReference type="ChEBI" id="CHEBI:29105"/>
    </ligand>
</feature>
<feature type="binding site" evidence="1">
    <location>
        <position position="38"/>
    </location>
    <ligand>
        <name>Zn(2+)</name>
        <dbReference type="ChEBI" id="CHEBI:29105"/>
    </ligand>
</feature>
<feature type="binding site" evidence="1">
    <location>
        <position position="41"/>
    </location>
    <ligand>
        <name>Zn(2+)</name>
        <dbReference type="ChEBI" id="CHEBI:29105"/>
    </ligand>
</feature>
<protein>
    <recommendedName>
        <fullName evidence="1">Large ribosomal subunit protein bL31</fullName>
    </recommendedName>
    <alternativeName>
        <fullName evidence="2">50S ribosomal protein L31</fullName>
    </alternativeName>
</protein>
<proteinExistence type="inferred from homology"/>
<accession>Q87T15</accession>
<gene>
    <name evidence="1" type="primary">rpmE</name>
    <name type="ordered locus">VP0255</name>
</gene>
<evidence type="ECO:0000255" key="1">
    <source>
        <dbReference type="HAMAP-Rule" id="MF_00501"/>
    </source>
</evidence>
<evidence type="ECO:0000305" key="2"/>
<sequence length="73" mass="8055">MKAGIHPEYKAVNATCSCGNSFEFNSTLGKESIHLDVCDKCHPFYTGKQRIVDTGGRVDRFNKRFGALSSGKK</sequence>
<dbReference type="EMBL" id="BA000031">
    <property type="protein sequence ID" value="BAC58518.1"/>
    <property type="molecule type" value="Genomic_DNA"/>
</dbReference>
<dbReference type="RefSeq" id="NP_796634.1">
    <property type="nucleotide sequence ID" value="NC_004603.1"/>
</dbReference>
<dbReference type="RefSeq" id="WP_005457203.1">
    <property type="nucleotide sequence ID" value="NC_004603.1"/>
</dbReference>
<dbReference type="SMR" id="Q87T15"/>
<dbReference type="GeneID" id="1187722"/>
<dbReference type="KEGG" id="vpa:VP0255"/>
<dbReference type="PATRIC" id="fig|223926.6.peg.246"/>
<dbReference type="eggNOG" id="COG0254">
    <property type="taxonomic scope" value="Bacteria"/>
</dbReference>
<dbReference type="HOGENOM" id="CLU_114306_4_3_6"/>
<dbReference type="Proteomes" id="UP000002493">
    <property type="component" value="Chromosome 1"/>
</dbReference>
<dbReference type="GO" id="GO:1990904">
    <property type="term" value="C:ribonucleoprotein complex"/>
    <property type="evidence" value="ECO:0007669"/>
    <property type="project" value="UniProtKB-KW"/>
</dbReference>
<dbReference type="GO" id="GO:0005840">
    <property type="term" value="C:ribosome"/>
    <property type="evidence" value="ECO:0007669"/>
    <property type="project" value="UniProtKB-KW"/>
</dbReference>
<dbReference type="GO" id="GO:0046872">
    <property type="term" value="F:metal ion binding"/>
    <property type="evidence" value="ECO:0007669"/>
    <property type="project" value="UniProtKB-KW"/>
</dbReference>
<dbReference type="GO" id="GO:0019843">
    <property type="term" value="F:rRNA binding"/>
    <property type="evidence" value="ECO:0007669"/>
    <property type="project" value="UniProtKB-KW"/>
</dbReference>
<dbReference type="GO" id="GO:0003735">
    <property type="term" value="F:structural constituent of ribosome"/>
    <property type="evidence" value="ECO:0007669"/>
    <property type="project" value="InterPro"/>
</dbReference>
<dbReference type="GO" id="GO:0006412">
    <property type="term" value="P:translation"/>
    <property type="evidence" value="ECO:0007669"/>
    <property type="project" value="UniProtKB-UniRule"/>
</dbReference>
<dbReference type="Gene3D" id="4.10.830.30">
    <property type="entry name" value="Ribosomal protein L31"/>
    <property type="match status" value="1"/>
</dbReference>
<dbReference type="HAMAP" id="MF_00501">
    <property type="entry name" value="Ribosomal_bL31_1"/>
    <property type="match status" value="1"/>
</dbReference>
<dbReference type="InterPro" id="IPR034704">
    <property type="entry name" value="Ribosomal_bL28/bL31-like_sf"/>
</dbReference>
<dbReference type="InterPro" id="IPR002150">
    <property type="entry name" value="Ribosomal_bL31"/>
</dbReference>
<dbReference type="InterPro" id="IPR027491">
    <property type="entry name" value="Ribosomal_bL31_A"/>
</dbReference>
<dbReference type="InterPro" id="IPR042105">
    <property type="entry name" value="Ribosomal_bL31_sf"/>
</dbReference>
<dbReference type="NCBIfam" id="TIGR00105">
    <property type="entry name" value="L31"/>
    <property type="match status" value="1"/>
</dbReference>
<dbReference type="NCBIfam" id="NF000612">
    <property type="entry name" value="PRK00019.1"/>
    <property type="match status" value="1"/>
</dbReference>
<dbReference type="NCBIfam" id="NF001809">
    <property type="entry name" value="PRK00528.1"/>
    <property type="match status" value="1"/>
</dbReference>
<dbReference type="PANTHER" id="PTHR33280">
    <property type="entry name" value="50S RIBOSOMAL PROTEIN L31, CHLOROPLASTIC"/>
    <property type="match status" value="1"/>
</dbReference>
<dbReference type="PANTHER" id="PTHR33280:SF6">
    <property type="entry name" value="LARGE RIBOSOMAL SUBUNIT PROTEIN BL31A"/>
    <property type="match status" value="1"/>
</dbReference>
<dbReference type="Pfam" id="PF01197">
    <property type="entry name" value="Ribosomal_L31"/>
    <property type="match status" value="1"/>
</dbReference>
<dbReference type="PRINTS" id="PR01249">
    <property type="entry name" value="RIBOSOMALL31"/>
</dbReference>
<dbReference type="SUPFAM" id="SSF143800">
    <property type="entry name" value="L28p-like"/>
    <property type="match status" value="1"/>
</dbReference>
<dbReference type="PROSITE" id="PS01143">
    <property type="entry name" value="RIBOSOMAL_L31"/>
    <property type="match status" value="1"/>
</dbReference>